<feature type="chain" id="PRO_0000158963" description="D-aminoacyl-tRNA deacylase">
    <location>
        <begin position="1"/>
        <end position="279"/>
    </location>
</feature>
<feature type="region of interest" description="Disordered" evidence="2">
    <location>
        <begin position="81"/>
        <end position="100"/>
    </location>
</feature>
<evidence type="ECO:0000255" key="1">
    <source>
        <dbReference type="HAMAP-Rule" id="MF_00562"/>
    </source>
</evidence>
<evidence type="ECO:0000256" key="2">
    <source>
        <dbReference type="SAM" id="MobiDB-lite"/>
    </source>
</evidence>
<keyword id="KW-0378">Hydrolase</keyword>
<keyword id="KW-0479">Metal-binding</keyword>
<keyword id="KW-1185">Reference proteome</keyword>
<keyword id="KW-0862">Zinc</keyword>
<protein>
    <recommendedName>
        <fullName evidence="1">D-aminoacyl-tRNA deacylase</fullName>
        <ecNumber evidence="1">3.1.1.96</ecNumber>
    </recommendedName>
    <alternativeName>
        <fullName>D-tyrosyl-tRNA(Tyr) deacylase</fullName>
    </alternativeName>
</protein>
<proteinExistence type="inferred from homology"/>
<sequence>MRLAVAYSTGDPAGRGAGRALARLLSAEPTSCPGAVECFKAGYLTIAGFPVEAVRLEMLDEAPDPQASAVIVLSKHRAESGRKSLTVHHPGNPTEDNSLGGRPMELAVAYPALAKALLISLAKASRETGLAESYEVTLEATHHGPTTPSKPVVFAELGSTEEDWRNPLGWETLALAVEEAIKTLPQIERECIPAAGFGGTHYVPKHTRLQLESGYCIGHTIPRYAFDRGVTAEVLKNAILKSYPGPARVALVEKKSLKSPQRRMVEEASEEAGAKVEYI</sequence>
<dbReference type="EC" id="3.1.1.96" evidence="1"/>
<dbReference type="EMBL" id="BA000002">
    <property type="protein sequence ID" value="BAA80481.2"/>
    <property type="molecule type" value="Genomic_DNA"/>
</dbReference>
<dbReference type="PIR" id="C72628">
    <property type="entry name" value="C72628"/>
</dbReference>
<dbReference type="RefSeq" id="WP_010866400.1">
    <property type="nucleotide sequence ID" value="NC_000854.2"/>
</dbReference>
<dbReference type="SMR" id="Q9YBW7"/>
<dbReference type="STRING" id="272557.APE_1483.1"/>
<dbReference type="EnsemblBacteria" id="BAA80481">
    <property type="protein sequence ID" value="BAA80481"/>
    <property type="gene ID" value="APE_1483.1"/>
</dbReference>
<dbReference type="GeneID" id="1446043"/>
<dbReference type="KEGG" id="ape:APE_1483.1"/>
<dbReference type="PATRIC" id="fig|272557.25.peg.1003"/>
<dbReference type="eggNOG" id="arCOG01616">
    <property type="taxonomic scope" value="Archaea"/>
</dbReference>
<dbReference type="Proteomes" id="UP000002518">
    <property type="component" value="Chromosome"/>
</dbReference>
<dbReference type="GO" id="GO:0051499">
    <property type="term" value="F:D-aminoacyl-tRNA deacylase activity"/>
    <property type="evidence" value="ECO:0007669"/>
    <property type="project" value="UniProtKB-UniRule"/>
</dbReference>
<dbReference type="GO" id="GO:0008270">
    <property type="term" value="F:zinc ion binding"/>
    <property type="evidence" value="ECO:0007669"/>
    <property type="project" value="UniProtKB-UniRule"/>
</dbReference>
<dbReference type="GO" id="GO:0019478">
    <property type="term" value="P:D-amino acid catabolic process"/>
    <property type="evidence" value="ECO:0007669"/>
    <property type="project" value="UniProtKB-UniRule"/>
</dbReference>
<dbReference type="Gene3D" id="3.40.50.10700">
    <property type="entry name" value="AF0625-like"/>
    <property type="match status" value="1"/>
</dbReference>
<dbReference type="Gene3D" id="3.40.630.50">
    <property type="entry name" value="AF0625-like"/>
    <property type="match status" value="1"/>
</dbReference>
<dbReference type="HAMAP" id="MF_00562">
    <property type="entry name" value="Deacylase_DtdA"/>
    <property type="match status" value="1"/>
</dbReference>
<dbReference type="InterPro" id="IPR018033">
    <property type="entry name" value="Deacylase_DtdA_archaea"/>
</dbReference>
<dbReference type="InterPro" id="IPR007508">
    <property type="entry name" value="DtdA"/>
</dbReference>
<dbReference type="NCBIfam" id="NF003072">
    <property type="entry name" value="PRK03995.1-4"/>
    <property type="match status" value="1"/>
</dbReference>
<dbReference type="PANTHER" id="PTHR34667">
    <property type="entry name" value="D-AMINOACYL-TRNA DEACYLASE"/>
    <property type="match status" value="1"/>
</dbReference>
<dbReference type="PANTHER" id="PTHR34667:SF1">
    <property type="entry name" value="D-AMINOACYL-TRNA DEACYLASE"/>
    <property type="match status" value="1"/>
</dbReference>
<dbReference type="Pfam" id="PF04414">
    <property type="entry name" value="tRNA_deacylase"/>
    <property type="match status" value="1"/>
</dbReference>
<dbReference type="PIRSF" id="PIRSF016210">
    <property type="entry name" value="UCP016210"/>
    <property type="match status" value="1"/>
</dbReference>
<dbReference type="SUPFAM" id="SSF142535">
    <property type="entry name" value="AF0625-like"/>
    <property type="match status" value="1"/>
</dbReference>
<name>DTDA_AERPE</name>
<reference key="1">
    <citation type="journal article" date="1999" name="DNA Res.">
        <title>Complete genome sequence of an aerobic hyper-thermophilic crenarchaeon, Aeropyrum pernix K1.</title>
        <authorList>
            <person name="Kawarabayasi Y."/>
            <person name="Hino Y."/>
            <person name="Horikawa H."/>
            <person name="Yamazaki S."/>
            <person name="Haikawa Y."/>
            <person name="Jin-no K."/>
            <person name="Takahashi M."/>
            <person name="Sekine M."/>
            <person name="Baba S."/>
            <person name="Ankai A."/>
            <person name="Kosugi H."/>
            <person name="Hosoyama A."/>
            <person name="Fukui S."/>
            <person name="Nagai Y."/>
            <person name="Nishijima K."/>
            <person name="Nakazawa H."/>
            <person name="Takamiya M."/>
            <person name="Masuda S."/>
            <person name="Funahashi T."/>
            <person name="Tanaka T."/>
            <person name="Kudoh Y."/>
            <person name="Yamazaki J."/>
            <person name="Kushida N."/>
            <person name="Oguchi A."/>
            <person name="Aoki K."/>
            <person name="Kubota K."/>
            <person name="Nakamura Y."/>
            <person name="Nomura N."/>
            <person name="Sako Y."/>
            <person name="Kikuchi H."/>
        </authorList>
    </citation>
    <scope>NUCLEOTIDE SEQUENCE [LARGE SCALE GENOMIC DNA]</scope>
    <source>
        <strain>ATCC 700893 / DSM 11879 / JCM 9820 / NBRC 100138 / K1</strain>
    </source>
</reference>
<accession>Q9YBW7</accession>
<comment type="function">
    <text evidence="1">D-aminoacyl-tRNA deacylase with broad substrate specificity. By recycling D-aminoacyl-tRNA to D-amino acids and free tRNA molecules, this enzyme counteracts the toxicity associated with the formation of D-aminoacyl-tRNA entities in vivo.</text>
</comment>
<comment type="catalytic activity">
    <reaction evidence="1">
        <text>a D-aminoacyl-tRNA + H2O = a tRNA + a D-alpha-amino acid + H(+)</text>
        <dbReference type="Rhea" id="RHEA:13953"/>
        <dbReference type="Rhea" id="RHEA-COMP:10123"/>
        <dbReference type="Rhea" id="RHEA-COMP:10124"/>
        <dbReference type="ChEBI" id="CHEBI:15377"/>
        <dbReference type="ChEBI" id="CHEBI:15378"/>
        <dbReference type="ChEBI" id="CHEBI:59871"/>
        <dbReference type="ChEBI" id="CHEBI:78442"/>
        <dbReference type="ChEBI" id="CHEBI:79333"/>
        <dbReference type="EC" id="3.1.1.96"/>
    </reaction>
</comment>
<comment type="catalytic activity">
    <reaction evidence="1">
        <text>glycyl-tRNA(Ala) + H2O = tRNA(Ala) + glycine + H(+)</text>
        <dbReference type="Rhea" id="RHEA:53744"/>
        <dbReference type="Rhea" id="RHEA-COMP:9657"/>
        <dbReference type="Rhea" id="RHEA-COMP:13640"/>
        <dbReference type="ChEBI" id="CHEBI:15377"/>
        <dbReference type="ChEBI" id="CHEBI:15378"/>
        <dbReference type="ChEBI" id="CHEBI:57305"/>
        <dbReference type="ChEBI" id="CHEBI:78442"/>
        <dbReference type="ChEBI" id="CHEBI:78522"/>
        <dbReference type="EC" id="3.1.1.96"/>
    </reaction>
</comment>
<comment type="cofactor">
    <cofactor evidence="1">
        <name>Zn(2+)</name>
        <dbReference type="ChEBI" id="CHEBI:29105"/>
    </cofactor>
    <text evidence="1">Binds 2 Zn(2+) ions per subunit.</text>
</comment>
<comment type="subunit">
    <text evidence="1">Monomer.</text>
</comment>
<comment type="similarity">
    <text evidence="1">Belongs to the DtdA deacylase family.</text>
</comment>
<organism>
    <name type="scientific">Aeropyrum pernix (strain ATCC 700893 / DSM 11879 / JCM 9820 / NBRC 100138 / K1)</name>
    <dbReference type="NCBI Taxonomy" id="272557"/>
    <lineage>
        <taxon>Archaea</taxon>
        <taxon>Thermoproteota</taxon>
        <taxon>Thermoprotei</taxon>
        <taxon>Desulfurococcales</taxon>
        <taxon>Desulfurococcaceae</taxon>
        <taxon>Aeropyrum</taxon>
    </lineage>
</organism>
<gene>
    <name evidence="1" type="primary">dtdA</name>
    <name type="ordered locus">APE_1483.1</name>
</gene>